<feature type="chain" id="PRO_0000211633" description="Chaperone modulatory protein CbpM">
    <location>
        <begin position="1"/>
        <end position="101"/>
    </location>
</feature>
<proteinExistence type="inferred from homology"/>
<protein>
    <recommendedName>
        <fullName evidence="1">Chaperone modulatory protein CbpM</fullName>
    </recommendedName>
</protein>
<dbReference type="EMBL" id="AE005674">
    <property type="protein sequence ID" value="AAN42629.2"/>
    <property type="molecule type" value="Genomic_DNA"/>
</dbReference>
<dbReference type="EMBL" id="AE014073">
    <property type="protein sequence ID" value="AAP16513.1"/>
    <property type="molecule type" value="Genomic_DNA"/>
</dbReference>
<dbReference type="RefSeq" id="WP_000024560.1">
    <property type="nucleotide sequence ID" value="NZ_WPGW01000289.1"/>
</dbReference>
<dbReference type="SMR" id="P63266"/>
<dbReference type="STRING" id="198214.SF1003"/>
<dbReference type="PaxDb" id="198214-SF1003"/>
<dbReference type="GeneID" id="93776412"/>
<dbReference type="KEGG" id="sfl:SF1003"/>
<dbReference type="KEGG" id="sfx:S1072"/>
<dbReference type="PATRIC" id="fig|198214.7.peg.1166"/>
<dbReference type="HOGENOM" id="CLU_144710_3_1_6"/>
<dbReference type="Proteomes" id="UP000001006">
    <property type="component" value="Chromosome"/>
</dbReference>
<dbReference type="Proteomes" id="UP000002673">
    <property type="component" value="Chromosome"/>
</dbReference>
<dbReference type="FunFam" id="1.10.1660.10:FF:000006">
    <property type="entry name" value="Chaperone modulatory protein CbpM"/>
    <property type="match status" value="1"/>
</dbReference>
<dbReference type="Gene3D" id="1.10.1660.10">
    <property type="match status" value="1"/>
</dbReference>
<dbReference type="HAMAP" id="MF_01155">
    <property type="entry name" value="CbpM"/>
    <property type="match status" value="1"/>
</dbReference>
<dbReference type="InterPro" id="IPR022835">
    <property type="entry name" value="CbpM"/>
</dbReference>
<dbReference type="NCBIfam" id="NF007617">
    <property type="entry name" value="PRK10265.1"/>
    <property type="match status" value="1"/>
</dbReference>
<dbReference type="Pfam" id="PF13591">
    <property type="entry name" value="MerR_2"/>
    <property type="match status" value="1"/>
</dbReference>
<sequence length="101" mass="11512">MANVTVTFTITEFCLHTGISEEELNEIVGLGVVEPREIQETTWVFDDHAAIVVQRAVRLRHELALDWPGIAVALTLMDDIAHLKQENRLLRQRLSRFVAHP</sequence>
<reference key="1">
    <citation type="journal article" date="2002" name="Nucleic Acids Res.">
        <title>Genome sequence of Shigella flexneri 2a: insights into pathogenicity through comparison with genomes of Escherichia coli K12 and O157.</title>
        <authorList>
            <person name="Jin Q."/>
            <person name="Yuan Z."/>
            <person name="Xu J."/>
            <person name="Wang Y."/>
            <person name="Shen Y."/>
            <person name="Lu W."/>
            <person name="Wang J."/>
            <person name="Liu H."/>
            <person name="Yang J."/>
            <person name="Yang F."/>
            <person name="Zhang X."/>
            <person name="Zhang J."/>
            <person name="Yang G."/>
            <person name="Wu H."/>
            <person name="Qu D."/>
            <person name="Dong J."/>
            <person name="Sun L."/>
            <person name="Xue Y."/>
            <person name="Zhao A."/>
            <person name="Gao Y."/>
            <person name="Zhu J."/>
            <person name="Kan B."/>
            <person name="Ding K."/>
            <person name="Chen S."/>
            <person name="Cheng H."/>
            <person name="Yao Z."/>
            <person name="He B."/>
            <person name="Chen R."/>
            <person name="Ma D."/>
            <person name="Qiang B."/>
            <person name="Wen Y."/>
            <person name="Hou Y."/>
            <person name="Yu J."/>
        </authorList>
    </citation>
    <scope>NUCLEOTIDE SEQUENCE [LARGE SCALE GENOMIC DNA]</scope>
    <source>
        <strain>301 / Serotype 2a</strain>
    </source>
</reference>
<reference key="2">
    <citation type="journal article" date="2003" name="Infect. Immun.">
        <title>Complete genome sequence and comparative genomics of Shigella flexneri serotype 2a strain 2457T.</title>
        <authorList>
            <person name="Wei J."/>
            <person name="Goldberg M.B."/>
            <person name="Burland V."/>
            <person name="Venkatesan M.M."/>
            <person name="Deng W."/>
            <person name="Fournier G."/>
            <person name="Mayhew G.F."/>
            <person name="Plunkett G. III"/>
            <person name="Rose D.J."/>
            <person name="Darling A."/>
            <person name="Mau B."/>
            <person name="Perna N.T."/>
            <person name="Payne S.M."/>
            <person name="Runyen-Janecky L.J."/>
            <person name="Zhou S."/>
            <person name="Schwartz D.C."/>
            <person name="Blattner F.R."/>
        </authorList>
    </citation>
    <scope>NUCLEOTIDE SEQUENCE [LARGE SCALE GENOMIC DNA]</scope>
    <source>
        <strain>ATCC 700930 / 2457T / Serotype 2a</strain>
    </source>
</reference>
<accession>P63266</accession>
<accession>P36660</accession>
<keyword id="KW-1185">Reference proteome</keyword>
<gene>
    <name evidence="1" type="primary">cbpM</name>
    <name type="ordered locus">SF1003</name>
    <name type="ordered locus">S1072</name>
</gene>
<comment type="function">
    <text evidence="1">Interacts with CbpA and inhibits both the DnaJ-like co-chaperone activity and the DNA binding activity of CbpA. Together with CbpA, modulates the activity of the DnaK chaperone system. Does not inhibit the co-chaperone activity of DnaJ.</text>
</comment>
<comment type="similarity">
    <text evidence="1">Belongs to the CbpM family.</text>
</comment>
<name>CBPM_SHIFL</name>
<evidence type="ECO:0000255" key="1">
    <source>
        <dbReference type="HAMAP-Rule" id="MF_01155"/>
    </source>
</evidence>
<organism>
    <name type="scientific">Shigella flexneri</name>
    <dbReference type="NCBI Taxonomy" id="623"/>
    <lineage>
        <taxon>Bacteria</taxon>
        <taxon>Pseudomonadati</taxon>
        <taxon>Pseudomonadota</taxon>
        <taxon>Gammaproteobacteria</taxon>
        <taxon>Enterobacterales</taxon>
        <taxon>Enterobacteriaceae</taxon>
        <taxon>Shigella</taxon>
    </lineage>
</organism>